<proteinExistence type="inferred from homology"/>
<feature type="chain" id="PRO_0000129549" description="Large ribosomal subunit protein uL2">
    <location>
        <begin position="1"/>
        <end position="284"/>
    </location>
</feature>
<feature type="region of interest" description="Disordered" evidence="2">
    <location>
        <begin position="28"/>
        <end position="50"/>
    </location>
</feature>
<feature type="region of interest" description="Disordered" evidence="2">
    <location>
        <begin position="232"/>
        <end position="284"/>
    </location>
</feature>
<feature type="compositionally biased region" description="Basic residues" evidence="2">
    <location>
        <begin position="36"/>
        <end position="46"/>
    </location>
</feature>
<feature type="compositionally biased region" description="Basic and acidic residues" evidence="2">
    <location>
        <begin position="240"/>
        <end position="250"/>
    </location>
</feature>
<feature type="compositionally biased region" description="Basic residues" evidence="2">
    <location>
        <begin position="264"/>
        <end position="284"/>
    </location>
</feature>
<comment type="function">
    <text evidence="1">One of the primary rRNA binding proteins. Required for association of the 30S and 50S subunits to form the 70S ribosome, for tRNA binding and peptide bond formation. It has been suggested to have peptidyltransferase activity; this is somewhat controversial. Makes several contacts with the 16S rRNA in the 70S ribosome.</text>
</comment>
<comment type="subunit">
    <text evidence="1">Part of the 50S ribosomal subunit. Forms a bridge to the 30S subunit in the 70S ribosome.</text>
</comment>
<comment type="similarity">
    <text evidence="1">Belongs to the universal ribosomal protein uL2 family.</text>
</comment>
<gene>
    <name evidence="1" type="primary">rplB</name>
    <name type="synonym">rl2</name>
    <name type="ordered locus">CT_525</name>
</gene>
<evidence type="ECO:0000255" key="1">
    <source>
        <dbReference type="HAMAP-Rule" id="MF_01320"/>
    </source>
</evidence>
<evidence type="ECO:0000256" key="2">
    <source>
        <dbReference type="SAM" id="MobiDB-lite"/>
    </source>
</evidence>
<evidence type="ECO:0000305" key="3"/>
<name>RL2_CHLTR</name>
<organism>
    <name type="scientific">Chlamydia trachomatis serovar D (strain ATCC VR-885 / DSM 19411 / UW-3/Cx)</name>
    <dbReference type="NCBI Taxonomy" id="272561"/>
    <lineage>
        <taxon>Bacteria</taxon>
        <taxon>Pseudomonadati</taxon>
        <taxon>Chlamydiota</taxon>
        <taxon>Chlamydiia</taxon>
        <taxon>Chlamydiales</taxon>
        <taxon>Chlamydiaceae</taxon>
        <taxon>Chlamydia/Chlamydophila group</taxon>
        <taxon>Chlamydia</taxon>
    </lineage>
</organism>
<sequence>MFKKFKPVTPGTRQLILPSFDELTTQGELKGSSSRRSVRPNKKLSFFKKSSGGRDNLGHISCRHRGGGVRRHYRVIDFKRNKDGIEAKVASVEYDPNRSAYIALLNYVDGEKRYILAPKGIKRGDRVISGEGSPFKTGCCMTLKSIPLGLSVHNVEMRPGSGGKLVRSAGLSAQIIAKTAGYVTLKMPSGEFRMLNEMCRATVGEVSNADHNLCVDGKAGRRRWKGIRPTVRGTAMNPVDHPHGGGEGRHNGYISQTPWGKVTKGLKTRDKRKSNKWIVKDRRK</sequence>
<dbReference type="EMBL" id="AE001273">
    <property type="protein sequence ID" value="AAC68126.1"/>
    <property type="molecule type" value="Genomic_DNA"/>
</dbReference>
<dbReference type="PIR" id="C71507">
    <property type="entry name" value="C71507"/>
</dbReference>
<dbReference type="RefSeq" id="NP_220040.1">
    <property type="nucleotide sequence ID" value="NC_000117.1"/>
</dbReference>
<dbReference type="RefSeq" id="WP_009871889.1">
    <property type="nucleotide sequence ID" value="NC_000117.1"/>
</dbReference>
<dbReference type="SMR" id="O84530"/>
<dbReference type="FunCoup" id="O84530">
    <property type="interactions" value="255"/>
</dbReference>
<dbReference type="STRING" id="272561.CT_525"/>
<dbReference type="EnsemblBacteria" id="AAC68126">
    <property type="protein sequence ID" value="AAC68126"/>
    <property type="gene ID" value="CT_525"/>
</dbReference>
<dbReference type="GeneID" id="884305"/>
<dbReference type="KEGG" id="ctr:CT_525"/>
<dbReference type="PATRIC" id="fig|272561.5.peg.569"/>
<dbReference type="HOGENOM" id="CLU_036235_2_1_0"/>
<dbReference type="InParanoid" id="O84530"/>
<dbReference type="OrthoDB" id="9778722at2"/>
<dbReference type="Proteomes" id="UP000000431">
    <property type="component" value="Chromosome"/>
</dbReference>
<dbReference type="GO" id="GO:0015934">
    <property type="term" value="C:large ribosomal subunit"/>
    <property type="evidence" value="ECO:0007669"/>
    <property type="project" value="InterPro"/>
</dbReference>
<dbReference type="GO" id="GO:0003723">
    <property type="term" value="F:RNA binding"/>
    <property type="evidence" value="ECO:0000318"/>
    <property type="project" value="GO_Central"/>
</dbReference>
<dbReference type="GO" id="GO:0019843">
    <property type="term" value="F:rRNA binding"/>
    <property type="evidence" value="ECO:0007669"/>
    <property type="project" value="UniProtKB-UniRule"/>
</dbReference>
<dbReference type="GO" id="GO:0003735">
    <property type="term" value="F:structural constituent of ribosome"/>
    <property type="evidence" value="ECO:0000318"/>
    <property type="project" value="GO_Central"/>
</dbReference>
<dbReference type="GO" id="GO:0016740">
    <property type="term" value="F:transferase activity"/>
    <property type="evidence" value="ECO:0007669"/>
    <property type="project" value="InterPro"/>
</dbReference>
<dbReference type="GO" id="GO:0002181">
    <property type="term" value="P:cytoplasmic translation"/>
    <property type="evidence" value="ECO:0000318"/>
    <property type="project" value="GO_Central"/>
</dbReference>
<dbReference type="FunFam" id="2.30.30.30:FF:000001">
    <property type="entry name" value="50S ribosomal protein L2"/>
    <property type="match status" value="1"/>
</dbReference>
<dbReference type="FunFam" id="2.40.50.140:FF:000003">
    <property type="entry name" value="50S ribosomal protein L2"/>
    <property type="match status" value="1"/>
</dbReference>
<dbReference type="FunFam" id="4.10.950.10:FF:000001">
    <property type="entry name" value="50S ribosomal protein L2"/>
    <property type="match status" value="1"/>
</dbReference>
<dbReference type="Gene3D" id="2.30.30.30">
    <property type="match status" value="1"/>
</dbReference>
<dbReference type="Gene3D" id="2.40.50.140">
    <property type="entry name" value="Nucleic acid-binding proteins"/>
    <property type="match status" value="1"/>
</dbReference>
<dbReference type="Gene3D" id="4.10.950.10">
    <property type="entry name" value="Ribosomal protein L2, domain 3"/>
    <property type="match status" value="1"/>
</dbReference>
<dbReference type="HAMAP" id="MF_01320_B">
    <property type="entry name" value="Ribosomal_uL2_B"/>
    <property type="match status" value="1"/>
</dbReference>
<dbReference type="InterPro" id="IPR012340">
    <property type="entry name" value="NA-bd_OB-fold"/>
</dbReference>
<dbReference type="InterPro" id="IPR014722">
    <property type="entry name" value="Rib_uL2_dom2"/>
</dbReference>
<dbReference type="InterPro" id="IPR002171">
    <property type="entry name" value="Ribosomal_uL2"/>
</dbReference>
<dbReference type="InterPro" id="IPR005880">
    <property type="entry name" value="Ribosomal_uL2_bac/org-type"/>
</dbReference>
<dbReference type="InterPro" id="IPR022669">
    <property type="entry name" value="Ribosomal_uL2_C"/>
</dbReference>
<dbReference type="InterPro" id="IPR022671">
    <property type="entry name" value="Ribosomal_uL2_CS"/>
</dbReference>
<dbReference type="InterPro" id="IPR014726">
    <property type="entry name" value="Ribosomal_uL2_dom3"/>
</dbReference>
<dbReference type="InterPro" id="IPR022666">
    <property type="entry name" value="Ribosomal_uL2_RNA-bd_dom"/>
</dbReference>
<dbReference type="InterPro" id="IPR008991">
    <property type="entry name" value="Translation_prot_SH3-like_sf"/>
</dbReference>
<dbReference type="NCBIfam" id="TIGR01171">
    <property type="entry name" value="rplB_bact"/>
    <property type="match status" value="1"/>
</dbReference>
<dbReference type="PANTHER" id="PTHR13691:SF5">
    <property type="entry name" value="LARGE RIBOSOMAL SUBUNIT PROTEIN UL2M"/>
    <property type="match status" value="1"/>
</dbReference>
<dbReference type="PANTHER" id="PTHR13691">
    <property type="entry name" value="RIBOSOMAL PROTEIN L2"/>
    <property type="match status" value="1"/>
</dbReference>
<dbReference type="Pfam" id="PF00181">
    <property type="entry name" value="Ribosomal_L2"/>
    <property type="match status" value="1"/>
</dbReference>
<dbReference type="Pfam" id="PF03947">
    <property type="entry name" value="Ribosomal_L2_C"/>
    <property type="match status" value="1"/>
</dbReference>
<dbReference type="PIRSF" id="PIRSF002158">
    <property type="entry name" value="Ribosomal_L2"/>
    <property type="match status" value="1"/>
</dbReference>
<dbReference type="SMART" id="SM01383">
    <property type="entry name" value="Ribosomal_L2"/>
    <property type="match status" value="1"/>
</dbReference>
<dbReference type="SMART" id="SM01382">
    <property type="entry name" value="Ribosomal_L2_C"/>
    <property type="match status" value="1"/>
</dbReference>
<dbReference type="SUPFAM" id="SSF50249">
    <property type="entry name" value="Nucleic acid-binding proteins"/>
    <property type="match status" value="1"/>
</dbReference>
<dbReference type="SUPFAM" id="SSF50104">
    <property type="entry name" value="Translation proteins SH3-like domain"/>
    <property type="match status" value="1"/>
</dbReference>
<dbReference type="PROSITE" id="PS00467">
    <property type="entry name" value="RIBOSOMAL_L2"/>
    <property type="match status" value="1"/>
</dbReference>
<keyword id="KW-1185">Reference proteome</keyword>
<keyword id="KW-0687">Ribonucleoprotein</keyword>
<keyword id="KW-0689">Ribosomal protein</keyword>
<keyword id="KW-0694">RNA-binding</keyword>
<keyword id="KW-0699">rRNA-binding</keyword>
<reference key="1">
    <citation type="journal article" date="1998" name="Science">
        <title>Genome sequence of an obligate intracellular pathogen of humans: Chlamydia trachomatis.</title>
        <authorList>
            <person name="Stephens R.S."/>
            <person name="Kalman S."/>
            <person name="Lammel C.J."/>
            <person name="Fan J."/>
            <person name="Marathe R."/>
            <person name="Aravind L."/>
            <person name="Mitchell W.P."/>
            <person name="Olinger L."/>
            <person name="Tatusov R.L."/>
            <person name="Zhao Q."/>
            <person name="Koonin E.V."/>
            <person name="Davis R.W."/>
        </authorList>
    </citation>
    <scope>NUCLEOTIDE SEQUENCE [LARGE SCALE GENOMIC DNA]</scope>
    <source>
        <strain>ATCC VR-885 / DSM 19411 / UW-3/Cx</strain>
    </source>
</reference>
<accession>O84530</accession>
<protein>
    <recommendedName>
        <fullName evidence="1">Large ribosomal subunit protein uL2</fullName>
    </recommendedName>
    <alternativeName>
        <fullName evidence="3">50S ribosomal protein L2</fullName>
    </alternativeName>
</protein>